<organism>
    <name type="scientific">Streptococcus pyogenes serotype M12 (strain MGAS2096)</name>
    <dbReference type="NCBI Taxonomy" id="370553"/>
    <lineage>
        <taxon>Bacteria</taxon>
        <taxon>Bacillati</taxon>
        <taxon>Bacillota</taxon>
        <taxon>Bacilli</taxon>
        <taxon>Lactobacillales</taxon>
        <taxon>Streptococcaceae</taxon>
        <taxon>Streptococcus</taxon>
    </lineage>
</organism>
<dbReference type="EC" id="2.7.7.8" evidence="1"/>
<dbReference type="EMBL" id="CP000261">
    <property type="protein sequence ID" value="ABF36735.1"/>
    <property type="molecule type" value="Genomic_DNA"/>
</dbReference>
<dbReference type="SMR" id="Q1J9S6"/>
<dbReference type="KEGG" id="spj:MGAS2096_Spy1683"/>
<dbReference type="HOGENOM" id="CLU_004217_2_2_9"/>
<dbReference type="GO" id="GO:0005829">
    <property type="term" value="C:cytosol"/>
    <property type="evidence" value="ECO:0007669"/>
    <property type="project" value="TreeGrafter"/>
</dbReference>
<dbReference type="GO" id="GO:0000175">
    <property type="term" value="F:3'-5'-RNA exonuclease activity"/>
    <property type="evidence" value="ECO:0007669"/>
    <property type="project" value="TreeGrafter"/>
</dbReference>
<dbReference type="GO" id="GO:0000287">
    <property type="term" value="F:magnesium ion binding"/>
    <property type="evidence" value="ECO:0007669"/>
    <property type="project" value="UniProtKB-UniRule"/>
</dbReference>
<dbReference type="GO" id="GO:0004654">
    <property type="term" value="F:polyribonucleotide nucleotidyltransferase activity"/>
    <property type="evidence" value="ECO:0007669"/>
    <property type="project" value="UniProtKB-UniRule"/>
</dbReference>
<dbReference type="GO" id="GO:0003723">
    <property type="term" value="F:RNA binding"/>
    <property type="evidence" value="ECO:0007669"/>
    <property type="project" value="UniProtKB-UniRule"/>
</dbReference>
<dbReference type="GO" id="GO:0006402">
    <property type="term" value="P:mRNA catabolic process"/>
    <property type="evidence" value="ECO:0007669"/>
    <property type="project" value="UniProtKB-UniRule"/>
</dbReference>
<dbReference type="GO" id="GO:0006396">
    <property type="term" value="P:RNA processing"/>
    <property type="evidence" value="ECO:0007669"/>
    <property type="project" value="InterPro"/>
</dbReference>
<dbReference type="CDD" id="cd02393">
    <property type="entry name" value="KH-I_PNPase"/>
    <property type="match status" value="1"/>
</dbReference>
<dbReference type="CDD" id="cd11363">
    <property type="entry name" value="RNase_PH_PNPase_1"/>
    <property type="match status" value="1"/>
</dbReference>
<dbReference type="CDD" id="cd11364">
    <property type="entry name" value="RNase_PH_PNPase_2"/>
    <property type="match status" value="1"/>
</dbReference>
<dbReference type="FunFam" id="2.40.50.140:FF:000023">
    <property type="entry name" value="Polyribonucleotide nucleotidyltransferase"/>
    <property type="match status" value="1"/>
</dbReference>
<dbReference type="FunFam" id="3.30.1370.10:FF:000001">
    <property type="entry name" value="Polyribonucleotide nucleotidyltransferase"/>
    <property type="match status" value="1"/>
</dbReference>
<dbReference type="FunFam" id="3.30.230.70:FF:000001">
    <property type="entry name" value="Polyribonucleotide nucleotidyltransferase"/>
    <property type="match status" value="1"/>
</dbReference>
<dbReference type="FunFam" id="3.30.230.70:FF:000002">
    <property type="entry name" value="Polyribonucleotide nucleotidyltransferase"/>
    <property type="match status" value="1"/>
</dbReference>
<dbReference type="Gene3D" id="3.30.230.70">
    <property type="entry name" value="GHMP Kinase, N-terminal domain"/>
    <property type="match status" value="2"/>
</dbReference>
<dbReference type="Gene3D" id="3.30.1370.10">
    <property type="entry name" value="K Homology domain, type 1"/>
    <property type="match status" value="1"/>
</dbReference>
<dbReference type="Gene3D" id="2.40.50.140">
    <property type="entry name" value="Nucleic acid-binding proteins"/>
    <property type="match status" value="1"/>
</dbReference>
<dbReference type="HAMAP" id="MF_01595">
    <property type="entry name" value="PNPase"/>
    <property type="match status" value="1"/>
</dbReference>
<dbReference type="InterPro" id="IPR001247">
    <property type="entry name" value="ExoRNase_PH_dom1"/>
</dbReference>
<dbReference type="InterPro" id="IPR015847">
    <property type="entry name" value="ExoRNase_PH_dom2"/>
</dbReference>
<dbReference type="InterPro" id="IPR036345">
    <property type="entry name" value="ExoRNase_PH_dom2_sf"/>
</dbReference>
<dbReference type="InterPro" id="IPR004087">
    <property type="entry name" value="KH_dom"/>
</dbReference>
<dbReference type="InterPro" id="IPR004088">
    <property type="entry name" value="KH_dom_type_1"/>
</dbReference>
<dbReference type="InterPro" id="IPR036612">
    <property type="entry name" value="KH_dom_type_1_sf"/>
</dbReference>
<dbReference type="InterPro" id="IPR012340">
    <property type="entry name" value="NA-bd_OB-fold"/>
</dbReference>
<dbReference type="InterPro" id="IPR012162">
    <property type="entry name" value="PNPase"/>
</dbReference>
<dbReference type="InterPro" id="IPR027408">
    <property type="entry name" value="PNPase/RNase_PH_dom_sf"/>
</dbReference>
<dbReference type="InterPro" id="IPR015848">
    <property type="entry name" value="PNPase_PH_RNA-bd_bac/org-type"/>
</dbReference>
<dbReference type="InterPro" id="IPR036456">
    <property type="entry name" value="PNPase_PH_RNA-bd_sf"/>
</dbReference>
<dbReference type="InterPro" id="IPR020568">
    <property type="entry name" value="Ribosomal_Su5_D2-typ_SF"/>
</dbReference>
<dbReference type="InterPro" id="IPR003029">
    <property type="entry name" value="S1_domain"/>
</dbReference>
<dbReference type="NCBIfam" id="TIGR03591">
    <property type="entry name" value="polynuc_phos"/>
    <property type="match status" value="1"/>
</dbReference>
<dbReference type="NCBIfam" id="NF008805">
    <property type="entry name" value="PRK11824.1"/>
    <property type="match status" value="1"/>
</dbReference>
<dbReference type="PANTHER" id="PTHR11252">
    <property type="entry name" value="POLYRIBONUCLEOTIDE NUCLEOTIDYLTRANSFERASE"/>
    <property type="match status" value="1"/>
</dbReference>
<dbReference type="PANTHER" id="PTHR11252:SF0">
    <property type="entry name" value="POLYRIBONUCLEOTIDE NUCLEOTIDYLTRANSFERASE 1, MITOCHONDRIAL"/>
    <property type="match status" value="1"/>
</dbReference>
<dbReference type="Pfam" id="PF00013">
    <property type="entry name" value="KH_1"/>
    <property type="match status" value="1"/>
</dbReference>
<dbReference type="Pfam" id="PF03726">
    <property type="entry name" value="PNPase"/>
    <property type="match status" value="1"/>
</dbReference>
<dbReference type="Pfam" id="PF01138">
    <property type="entry name" value="RNase_PH"/>
    <property type="match status" value="2"/>
</dbReference>
<dbReference type="Pfam" id="PF03725">
    <property type="entry name" value="RNase_PH_C"/>
    <property type="match status" value="2"/>
</dbReference>
<dbReference type="Pfam" id="PF00575">
    <property type="entry name" value="S1"/>
    <property type="match status" value="1"/>
</dbReference>
<dbReference type="PIRSF" id="PIRSF005499">
    <property type="entry name" value="PNPase"/>
    <property type="match status" value="1"/>
</dbReference>
<dbReference type="SMART" id="SM00322">
    <property type="entry name" value="KH"/>
    <property type="match status" value="1"/>
</dbReference>
<dbReference type="SMART" id="SM00316">
    <property type="entry name" value="S1"/>
    <property type="match status" value="1"/>
</dbReference>
<dbReference type="SUPFAM" id="SSF54791">
    <property type="entry name" value="Eukaryotic type KH-domain (KH-domain type I)"/>
    <property type="match status" value="1"/>
</dbReference>
<dbReference type="SUPFAM" id="SSF50249">
    <property type="entry name" value="Nucleic acid-binding proteins"/>
    <property type="match status" value="1"/>
</dbReference>
<dbReference type="SUPFAM" id="SSF46915">
    <property type="entry name" value="Polynucleotide phosphorylase/guanosine pentaphosphate synthase (PNPase/GPSI), domain 3"/>
    <property type="match status" value="1"/>
</dbReference>
<dbReference type="SUPFAM" id="SSF55666">
    <property type="entry name" value="Ribonuclease PH domain 2-like"/>
    <property type="match status" value="2"/>
</dbReference>
<dbReference type="SUPFAM" id="SSF54211">
    <property type="entry name" value="Ribosomal protein S5 domain 2-like"/>
    <property type="match status" value="2"/>
</dbReference>
<dbReference type="PROSITE" id="PS50084">
    <property type="entry name" value="KH_TYPE_1"/>
    <property type="match status" value="1"/>
</dbReference>
<dbReference type="PROSITE" id="PS50126">
    <property type="entry name" value="S1"/>
    <property type="match status" value="1"/>
</dbReference>
<name>PNP_STRPB</name>
<gene>
    <name evidence="1" type="primary">pnp</name>
    <name type="ordered locus">MGAS2096_Spy1683</name>
</gene>
<accession>Q1J9S6</accession>
<evidence type="ECO:0000255" key="1">
    <source>
        <dbReference type="HAMAP-Rule" id="MF_01595"/>
    </source>
</evidence>
<evidence type="ECO:0000256" key="2">
    <source>
        <dbReference type="SAM" id="MobiDB-lite"/>
    </source>
</evidence>
<proteinExistence type="inferred from homology"/>
<sequence>MQGNPLVVEVGQVAKQANGATVVRYGDSTVLTAAVMSKKMATGDFFPLQVNYEEKMYAAGKFPGGFMKREGRPSTDATLTARLIDRPIRPMFAEGFRNEVQVINTVLSYDENASAPMAAMFGSSLALSISDIPFNGPIAGVQVGYIDGEFIINPDKEQMEASLLELTVAGSKEAINMVESGAKELSEDIMLEALLKGHQAIQELIAFQEQIVAVVGKEKAEVELLQVDADLQADIVAKYNAQLQKAVQVEEKKAREAATEAVKEMVKAEYEERYAEDENLATIMRDVAEILEQMEHAEVRRLITEDKIRPDGRKIDEIRPLDAVVDFLPKVHGSGLFTRGQTQALSILTLAPMGETQIIDGLAPEYKKRFLHHYNFPQYSVGETGRYGAAGRREIGHGALGERALEQVLPSLEEFPYAIRLVAEVLESNGSSSQASICAGTLALMAGGVPIKAPVAGIAMGLISDGTNYTVLTDIQGLEDHFGDMDFKVAGTREGITALQMDIKIAGITPQILEEALAQAKKARFEILDVIEATIAEPRPELAPTAPKIDTIKIDVDKIKVVIGKGGETIDKIIAETGVKIDIDDEGNVSIYSSDQAAINRTKEIIAGLVREAKVGEVYHAKVVRIEKFGAFVNLFDKTDALVHISEIAWTRTTNVSDVLEVGEDVDVKVIKIDEKGRVDASMKALIPRPPKPEKKEEKHD</sequence>
<reference key="1">
    <citation type="journal article" date="2006" name="Proc. Natl. Acad. Sci. U.S.A.">
        <title>Molecular genetic anatomy of inter- and intraserotype variation in the human bacterial pathogen group A Streptococcus.</title>
        <authorList>
            <person name="Beres S.B."/>
            <person name="Richter E.W."/>
            <person name="Nagiec M.J."/>
            <person name="Sumby P."/>
            <person name="Porcella S.F."/>
            <person name="DeLeo F.R."/>
            <person name="Musser J.M."/>
        </authorList>
    </citation>
    <scope>NUCLEOTIDE SEQUENCE [LARGE SCALE GENOMIC DNA]</scope>
    <source>
        <strain>MGAS2096</strain>
    </source>
</reference>
<comment type="function">
    <text evidence="1">Involved in mRNA degradation. Catalyzes the phosphorolysis of single-stranded polyribonucleotides processively in the 3'- to 5'-direction.</text>
</comment>
<comment type="catalytic activity">
    <reaction evidence="1">
        <text>RNA(n+1) + phosphate = RNA(n) + a ribonucleoside 5'-diphosphate</text>
        <dbReference type="Rhea" id="RHEA:22096"/>
        <dbReference type="Rhea" id="RHEA-COMP:14527"/>
        <dbReference type="Rhea" id="RHEA-COMP:17342"/>
        <dbReference type="ChEBI" id="CHEBI:43474"/>
        <dbReference type="ChEBI" id="CHEBI:57930"/>
        <dbReference type="ChEBI" id="CHEBI:140395"/>
        <dbReference type="EC" id="2.7.7.8"/>
    </reaction>
</comment>
<comment type="cofactor">
    <cofactor evidence="1">
        <name>Mg(2+)</name>
        <dbReference type="ChEBI" id="CHEBI:18420"/>
    </cofactor>
</comment>
<comment type="subcellular location">
    <subcellularLocation>
        <location evidence="1">Cytoplasm</location>
    </subcellularLocation>
</comment>
<comment type="similarity">
    <text evidence="1">Belongs to the polyribonucleotide nucleotidyltransferase family.</text>
</comment>
<keyword id="KW-0963">Cytoplasm</keyword>
<keyword id="KW-0460">Magnesium</keyword>
<keyword id="KW-0479">Metal-binding</keyword>
<keyword id="KW-0548">Nucleotidyltransferase</keyword>
<keyword id="KW-0694">RNA-binding</keyword>
<keyword id="KW-0808">Transferase</keyword>
<protein>
    <recommendedName>
        <fullName evidence="1">Polyribonucleotide nucleotidyltransferase</fullName>
        <ecNumber evidence="1">2.7.7.8</ecNumber>
    </recommendedName>
    <alternativeName>
        <fullName evidence="1">Polynucleotide phosphorylase</fullName>
        <shortName evidence="1">PNPase</shortName>
    </alternativeName>
</protein>
<feature type="chain" id="PRO_0000329873" description="Polyribonucleotide nucleotidyltransferase">
    <location>
        <begin position="1"/>
        <end position="701"/>
    </location>
</feature>
<feature type="domain" description="KH" evidence="1">
    <location>
        <begin position="547"/>
        <end position="606"/>
    </location>
</feature>
<feature type="domain" description="S1 motif" evidence="1">
    <location>
        <begin position="616"/>
        <end position="684"/>
    </location>
</feature>
<feature type="region of interest" description="Disordered" evidence="2">
    <location>
        <begin position="682"/>
        <end position="701"/>
    </location>
</feature>
<feature type="compositionally biased region" description="Basic and acidic residues" evidence="2">
    <location>
        <begin position="691"/>
        <end position="701"/>
    </location>
</feature>
<feature type="binding site" evidence="1">
    <location>
        <position position="480"/>
    </location>
    <ligand>
        <name>Mg(2+)</name>
        <dbReference type="ChEBI" id="CHEBI:18420"/>
    </ligand>
</feature>
<feature type="binding site" evidence="1">
    <location>
        <position position="486"/>
    </location>
    <ligand>
        <name>Mg(2+)</name>
        <dbReference type="ChEBI" id="CHEBI:18420"/>
    </ligand>
</feature>